<keyword id="KW-0067">ATP-binding</keyword>
<keyword id="KW-0460">Magnesium</keyword>
<keyword id="KW-0547">Nucleotide-binding</keyword>
<keyword id="KW-0808">Transferase</keyword>
<keyword id="KW-0819">tRNA processing</keyword>
<comment type="function">
    <text evidence="1">Catalyzes the transfer of a dimethylallyl group onto the adenine at position 37 in tRNAs that read codons beginning with uridine, leading to the formation of N6-(dimethylallyl)adenosine (i(6)A).</text>
</comment>
<comment type="catalytic activity">
    <reaction evidence="1">
        <text>adenosine(37) in tRNA + dimethylallyl diphosphate = N(6)-dimethylallyladenosine(37) in tRNA + diphosphate</text>
        <dbReference type="Rhea" id="RHEA:26482"/>
        <dbReference type="Rhea" id="RHEA-COMP:10162"/>
        <dbReference type="Rhea" id="RHEA-COMP:10375"/>
        <dbReference type="ChEBI" id="CHEBI:33019"/>
        <dbReference type="ChEBI" id="CHEBI:57623"/>
        <dbReference type="ChEBI" id="CHEBI:74411"/>
        <dbReference type="ChEBI" id="CHEBI:74415"/>
        <dbReference type="EC" id="2.5.1.75"/>
    </reaction>
</comment>
<comment type="cofactor">
    <cofactor evidence="1">
        <name>Mg(2+)</name>
        <dbReference type="ChEBI" id="CHEBI:18420"/>
    </cofactor>
</comment>
<comment type="subunit">
    <text evidence="1">Monomer.</text>
</comment>
<comment type="similarity">
    <text evidence="1">Belongs to the IPP transferase family.</text>
</comment>
<feature type="chain" id="PRO_1000020561" description="tRNA dimethylallyltransferase">
    <location>
        <begin position="1"/>
        <end position="291"/>
    </location>
</feature>
<feature type="region of interest" description="Interaction with substrate tRNA" evidence="1">
    <location>
        <begin position="34"/>
        <end position="37"/>
    </location>
</feature>
<feature type="binding site" evidence="1">
    <location>
        <begin position="9"/>
        <end position="16"/>
    </location>
    <ligand>
        <name>ATP</name>
        <dbReference type="ChEBI" id="CHEBI:30616"/>
    </ligand>
</feature>
<feature type="binding site" evidence="1">
    <location>
        <begin position="11"/>
        <end position="16"/>
    </location>
    <ligand>
        <name>substrate</name>
    </ligand>
</feature>
<feature type="site" description="Interaction with substrate tRNA" evidence="1">
    <location>
        <position position="96"/>
    </location>
</feature>
<proteinExistence type="inferred from homology"/>
<protein>
    <recommendedName>
        <fullName evidence="1">tRNA dimethylallyltransferase</fullName>
        <ecNumber evidence="1">2.5.1.75</ecNumber>
    </recommendedName>
    <alternativeName>
        <fullName evidence="1">Dimethylallyl diphosphate:tRNA dimethylallyltransferase</fullName>
        <shortName evidence="1">DMAPP:tRNA dimethylallyltransferase</shortName>
        <shortName evidence="1">DMATase</shortName>
    </alternativeName>
    <alternativeName>
        <fullName evidence="1">Isopentenyl-diphosphate:tRNA isopentenyltransferase</fullName>
        <shortName evidence="1">IPP transferase</shortName>
        <shortName evidence="1">IPPT</shortName>
        <shortName evidence="1">IPTase</shortName>
    </alternativeName>
</protein>
<organism>
    <name type="scientific">Aster yellows witches'-broom phytoplasma (strain AYWB)</name>
    <dbReference type="NCBI Taxonomy" id="322098"/>
    <lineage>
        <taxon>Bacteria</taxon>
        <taxon>Bacillati</taxon>
        <taxon>Mycoplasmatota</taxon>
        <taxon>Mollicutes</taxon>
        <taxon>Acholeplasmatales</taxon>
        <taxon>Acholeplasmataceae</taxon>
        <taxon>Candidatus Phytoplasma</taxon>
        <taxon>16SrI (Aster yellows group)</taxon>
    </lineage>
</organism>
<evidence type="ECO:0000255" key="1">
    <source>
        <dbReference type="HAMAP-Rule" id="MF_00185"/>
    </source>
</evidence>
<gene>
    <name evidence="1" type="primary">miaA</name>
    <name type="ordered locus">AYWB_446</name>
</gene>
<dbReference type="EC" id="2.5.1.75" evidence="1"/>
<dbReference type="EMBL" id="CP000061">
    <property type="protein sequence ID" value="ABC65563.1"/>
    <property type="molecule type" value="Genomic_DNA"/>
</dbReference>
<dbReference type="RefSeq" id="WP_011412727.1">
    <property type="nucleotide sequence ID" value="NC_007716.1"/>
</dbReference>
<dbReference type="SMR" id="Q2NJ30"/>
<dbReference type="STRING" id="322098.AYWB_446"/>
<dbReference type="KEGG" id="ayw:AYWB_446"/>
<dbReference type="eggNOG" id="COG0324">
    <property type="taxonomic scope" value="Bacteria"/>
</dbReference>
<dbReference type="HOGENOM" id="CLU_032616_0_1_14"/>
<dbReference type="OrthoDB" id="9776390at2"/>
<dbReference type="PhylomeDB" id="Q2NJ30"/>
<dbReference type="Proteomes" id="UP000001934">
    <property type="component" value="Chromosome"/>
</dbReference>
<dbReference type="GO" id="GO:0005524">
    <property type="term" value="F:ATP binding"/>
    <property type="evidence" value="ECO:0007669"/>
    <property type="project" value="UniProtKB-UniRule"/>
</dbReference>
<dbReference type="GO" id="GO:0052381">
    <property type="term" value="F:tRNA dimethylallyltransferase activity"/>
    <property type="evidence" value="ECO:0007669"/>
    <property type="project" value="UniProtKB-UniRule"/>
</dbReference>
<dbReference type="GO" id="GO:0006400">
    <property type="term" value="P:tRNA modification"/>
    <property type="evidence" value="ECO:0007669"/>
    <property type="project" value="TreeGrafter"/>
</dbReference>
<dbReference type="Gene3D" id="3.40.50.300">
    <property type="entry name" value="P-loop containing nucleotide triphosphate hydrolases"/>
    <property type="match status" value="1"/>
</dbReference>
<dbReference type="HAMAP" id="MF_00185">
    <property type="entry name" value="IPP_trans"/>
    <property type="match status" value="1"/>
</dbReference>
<dbReference type="InterPro" id="IPR039657">
    <property type="entry name" value="Dimethylallyltransferase"/>
</dbReference>
<dbReference type="InterPro" id="IPR018022">
    <property type="entry name" value="IPT"/>
</dbReference>
<dbReference type="InterPro" id="IPR027417">
    <property type="entry name" value="P-loop_NTPase"/>
</dbReference>
<dbReference type="NCBIfam" id="TIGR00174">
    <property type="entry name" value="miaA"/>
    <property type="match status" value="1"/>
</dbReference>
<dbReference type="PANTHER" id="PTHR11088">
    <property type="entry name" value="TRNA DIMETHYLALLYLTRANSFERASE"/>
    <property type="match status" value="1"/>
</dbReference>
<dbReference type="PANTHER" id="PTHR11088:SF60">
    <property type="entry name" value="TRNA DIMETHYLALLYLTRANSFERASE"/>
    <property type="match status" value="1"/>
</dbReference>
<dbReference type="Pfam" id="PF01715">
    <property type="entry name" value="IPPT"/>
    <property type="match status" value="1"/>
</dbReference>
<dbReference type="SUPFAM" id="SSF52540">
    <property type="entry name" value="P-loop containing nucleoside triphosphate hydrolases"/>
    <property type="match status" value="2"/>
</dbReference>
<accession>Q2NJ30</accession>
<reference key="1">
    <citation type="journal article" date="2006" name="J. Bacteriol.">
        <title>Living with genome instability: the adaptation of phytoplasmas to diverse environments of their insect and plant hosts.</title>
        <authorList>
            <person name="Bai X."/>
            <person name="Zhang J."/>
            <person name="Ewing A."/>
            <person name="Miller S.A."/>
            <person name="Jancso Radek A."/>
            <person name="Shevchenko D.V."/>
            <person name="Tsukerman K."/>
            <person name="Walunas T."/>
            <person name="Lapidus A."/>
            <person name="Campbell J.W."/>
            <person name="Hogenhout S.A."/>
        </authorList>
    </citation>
    <scope>NUCLEOTIDE SEQUENCE [LARGE SCALE GENOMIC DNA]</scope>
    <source>
        <strain>AYWB</strain>
    </source>
</reference>
<sequence length="291" mass="33524">MKKVIAITGPTASGKTSLSIKIAKKFNLEIINCDSLQMYQKYDIGTAKITIEEAQGIKHHLLDFLTPGTNYNIYYFQKDARKKIEEMPLPLFVGGSGLYLKSVLFDYELTPKSLFLPPISLTAIENMVDFIKKKDPQLIANLDLKNPRRILSAYQDLLSGTLRSQKNKKHNPLYSSLIFYLDIDRQILKKRVILRLEQMLKKGFIEEVNQIQTFFPNANFNIIGYREIKVLLEGKITLDQAKTLIIQKTMQYAKRQKTWFKNQIKPMILDALSPDLEKTTIGLINNFLKTD</sequence>
<name>MIAA_AYWBP</name>